<dbReference type="EMBL" id="AL111168">
    <property type="protein sequence ID" value="CAL35108.1"/>
    <property type="molecule type" value="Genomic_DNA"/>
</dbReference>
<dbReference type="EMBL" id="Z36940">
    <property type="protein sequence ID" value="CAA85392.1"/>
    <property type="molecule type" value="Genomic_DNA"/>
</dbReference>
<dbReference type="PIR" id="C81374">
    <property type="entry name" value="C81374"/>
</dbReference>
<dbReference type="PIR" id="I40758">
    <property type="entry name" value="I40758"/>
</dbReference>
<dbReference type="RefSeq" id="WP_010891900.1">
    <property type="nucleotide sequence ID" value="NZ_SZUC01000001.1"/>
</dbReference>
<dbReference type="RefSeq" id="YP_002344385.1">
    <property type="nucleotide sequence ID" value="NC_002163.1"/>
</dbReference>
<dbReference type="IntAct" id="P45489">
    <property type="interactions" value="68"/>
</dbReference>
<dbReference type="STRING" id="192222.Cj0990c"/>
<dbReference type="PaxDb" id="192222-Cj0990c"/>
<dbReference type="EnsemblBacteria" id="CAL35108">
    <property type="protein sequence ID" value="CAL35108"/>
    <property type="gene ID" value="Cj0990c"/>
</dbReference>
<dbReference type="GeneID" id="905281"/>
<dbReference type="KEGG" id="cje:Cj0990c"/>
<dbReference type="PATRIC" id="fig|192222.6.peg.972"/>
<dbReference type="eggNOG" id="ENOG50318XR">
    <property type="taxonomic scope" value="Bacteria"/>
</dbReference>
<dbReference type="HOGENOM" id="CLU_1105531_0_0_7"/>
<dbReference type="OrthoDB" id="5354443at2"/>
<dbReference type="Proteomes" id="UP000000799">
    <property type="component" value="Chromosome"/>
</dbReference>
<dbReference type="InterPro" id="IPR035393">
    <property type="entry name" value="DUF5416"/>
</dbReference>
<dbReference type="Pfam" id="PF17437">
    <property type="entry name" value="DUF5416"/>
    <property type="match status" value="1"/>
</dbReference>
<reference key="1">
    <citation type="journal article" date="2000" name="Nature">
        <title>The genome sequence of the food-borne pathogen Campylobacter jejuni reveals hypervariable sequences.</title>
        <authorList>
            <person name="Parkhill J."/>
            <person name="Wren B.W."/>
            <person name="Mungall K.L."/>
            <person name="Ketley J.M."/>
            <person name="Churcher C.M."/>
            <person name="Basham D."/>
            <person name="Chillingworth T."/>
            <person name="Davies R.M."/>
            <person name="Feltwell T."/>
            <person name="Holroyd S."/>
            <person name="Jagels K."/>
            <person name="Karlyshev A.V."/>
            <person name="Moule S."/>
            <person name="Pallen M.J."/>
            <person name="Penn C.W."/>
            <person name="Quail M.A."/>
            <person name="Rajandream M.A."/>
            <person name="Rutherford K.M."/>
            <person name="van Vliet A.H.M."/>
            <person name="Whitehead S."/>
            <person name="Barrell B.G."/>
        </authorList>
    </citation>
    <scope>NUCLEOTIDE SEQUENCE [LARGE SCALE GENOMIC DNA]</scope>
    <source>
        <strain>ATCC 700819 / NCTC 11168</strain>
    </source>
</reference>
<reference key="2">
    <citation type="journal article" date="1995" name="J. Bacteriol.">
        <title>Expression and characterization of Campylobacter jejuni benzoylglycine amidohydrolase (Hippuricase) gene in Escherichia coli.</title>
        <authorList>
            <person name="Hani E.K."/>
            <person name="Chan V.L."/>
        </authorList>
    </citation>
    <scope>NUCLEOTIDE SEQUENCE [GENOMIC DNA] OF 160-253</scope>
    <source>
        <strain>ATCC 43431 / TGH 9011 / Serotype O:3</strain>
    </source>
</reference>
<organism>
    <name type="scientific">Campylobacter jejuni subsp. jejuni serotype O:2 (strain ATCC 700819 / NCTC 11168)</name>
    <dbReference type="NCBI Taxonomy" id="192222"/>
    <lineage>
        <taxon>Bacteria</taxon>
        <taxon>Pseudomonadati</taxon>
        <taxon>Campylobacterota</taxon>
        <taxon>Epsilonproteobacteria</taxon>
        <taxon>Campylobacterales</taxon>
        <taxon>Campylobacteraceae</taxon>
        <taxon>Campylobacter</taxon>
    </lineage>
</organism>
<name>Y990_CAMJE</name>
<gene>
    <name type="ordered locus">Cj0990c</name>
</gene>
<sequence>MMMKIVFKGKSSEYEIQRSCFCVDAFVIKDKIEERDGVDFITSNVDLLEFSDDSFTFEEIVKHFNICDTEDMIIVEDFDMKSNKDNQNQEDDIEHNILKSEKIIHENTKQTSMQFKNLKFFSRIFKNENFLSDFKESKQEVVTIKKHEKLEIFKNLSQEDQEISFVKIEILNYDSNEDSLSFNLDIFPSGMSYKYGILKGSMHIILQGKTSSTMLFPFLKSMIYKNKSENSSEKIFTLMINQKKHYKLIANLS</sequence>
<proteinExistence type="predicted"/>
<keyword id="KW-1185">Reference proteome</keyword>
<protein>
    <recommendedName>
        <fullName>Uncharacterized protein Cj0990c</fullName>
    </recommendedName>
</protein>
<feature type="chain" id="PRO_0000214878" description="Uncharacterized protein Cj0990c">
    <location>
        <begin position="1"/>
        <end position="253"/>
    </location>
</feature>
<accession>P45489</accession>
<accession>Q0P9R2</accession>
<accession>Q9PNV0</accession>